<proteinExistence type="inferred from homology"/>
<reference key="1">
    <citation type="journal article" date="2002" name="Proc. Natl. Acad. Sci. U.S.A.">
        <title>The complete genome of hyperthermophile Methanopyrus kandleri AV19 and monophyly of archaeal methanogens.</title>
        <authorList>
            <person name="Slesarev A.I."/>
            <person name="Mezhevaya K.V."/>
            <person name="Makarova K.S."/>
            <person name="Polushin N.N."/>
            <person name="Shcherbinina O.V."/>
            <person name="Shakhova V.V."/>
            <person name="Belova G.I."/>
            <person name="Aravind L."/>
            <person name="Natale D.A."/>
            <person name="Rogozin I.B."/>
            <person name="Tatusov R.L."/>
            <person name="Wolf Y.I."/>
            <person name="Stetter K.O."/>
            <person name="Malykh A.G."/>
            <person name="Koonin E.V."/>
            <person name="Kozyavkin S.A."/>
        </authorList>
    </citation>
    <scope>NUCLEOTIDE SEQUENCE [LARGE SCALE GENOMIC DNA]</scope>
    <source>
        <strain>AV19 / DSM 6324 / JCM 9639 / NBRC 100938</strain>
    </source>
</reference>
<accession>Q8TVG5</accession>
<name>SYV_METKA</name>
<protein>
    <recommendedName>
        <fullName evidence="1">Valine--tRNA ligase</fullName>
        <ecNumber evidence="1">6.1.1.9</ecNumber>
    </recommendedName>
    <alternativeName>
        <fullName evidence="1">Valyl-tRNA synthetase</fullName>
        <shortName evidence="1">ValRS</shortName>
    </alternativeName>
</protein>
<feature type="chain" id="PRO_0000224624" description="Valine--tRNA ligase">
    <location>
        <begin position="1"/>
        <end position="914"/>
    </location>
</feature>
<feature type="short sequence motif" description="'HIGH' region">
    <location>
        <begin position="47"/>
        <end position="57"/>
    </location>
</feature>
<feature type="short sequence motif" description="'KMSKS' region">
    <location>
        <begin position="552"/>
        <end position="556"/>
    </location>
</feature>
<feature type="binding site" evidence="1">
    <location>
        <position position="555"/>
    </location>
    <ligand>
        <name>ATP</name>
        <dbReference type="ChEBI" id="CHEBI:30616"/>
    </ligand>
</feature>
<sequence length="914" mass="105317">MPGEAPVEDYDPKEIEPKWRERWLEERKYRFEGGEDRPAFVIDTPPPYPTGELHMGHVLNWTYMDVVARYKRMCGYDVFFPQGWDCHGLPTEVKVEEIHGITKRDAPRREFRKLCEELTLENIRKMREQLIQLGCSIDWWTDCIDYENEELKELGSYVTMDPDYIRRSQYGFLELLEKGYAYREEHPVNWCPRCETAIAFAEVEYVTRETYLNYIEFPVADGDGSVTIATTRPELLPACVAVAVHPDDDRYSDLVGKKLVVPLHERFGDRDTPWEVPVIADEEVDPEFGTGIVMICTFGDKQDVAWVKRHDLPIVRAIDEQGKMTEVAGEFAGMEVEEARAAIVEALKEEGYLVKREKITQNVGVCWRCKTPIEILVKEQWFVKVRELAEDVKEAARKMVWIPEHMRKRLEDWTESMDWDWCISRQRIFATPIPVWYCKECGEVIPAEKDQLPVDPTRDDPPVDECPKCGCSEFEPETDVMDTWMDSSITPLVITGWPDEEPDLPVDLRPQGHDIIRTWLYYTTVRALVHADTEPFKEILINGMVFGEDGYKMSKSRGNVVEPTEVIEEYGADALRYWAVSSGAPGSDVQYMTKTIKRGYRFAKKIWNVCRLAKDHIDDAPSVEEVEGDLTPADRWILSKFHRLVDEVTEHLESGYRFNDAIKAIEEFAWEELADDYLEMAKLRLYRPEELGEGSREAARAVLRHVLDGLLRLLAPFMPFVTEELYYRLFDESVHDQAWPEASEKWIDEGVEEVGEILREIVTEVRKAKTDAGLRMGAEFEGLTVHVQDEELAESLEKAIPDLKSATRAKEVEVEVGEPKLERVPVKVEPRMDVIGPKYRELTRDIIEYVENNPDEVASAIKEDGKAKLEIDGEKVVLDEECVDVEWELRVKGGEGKAVEIRPGVVVEIRGLST</sequence>
<evidence type="ECO:0000255" key="1">
    <source>
        <dbReference type="HAMAP-Rule" id="MF_02005"/>
    </source>
</evidence>
<comment type="function">
    <text evidence="1">Catalyzes the attachment of valine to tRNA(Val). As ValRS can inadvertently accommodate and process structurally similar amino acids such as threonine, to avoid such errors, it has a 'posttransfer' editing activity that hydrolyzes mischarged Thr-tRNA(Val) in a tRNA-dependent manner.</text>
</comment>
<comment type="catalytic activity">
    <reaction evidence="1">
        <text>tRNA(Val) + L-valine + ATP = L-valyl-tRNA(Val) + AMP + diphosphate</text>
        <dbReference type="Rhea" id="RHEA:10704"/>
        <dbReference type="Rhea" id="RHEA-COMP:9672"/>
        <dbReference type="Rhea" id="RHEA-COMP:9708"/>
        <dbReference type="ChEBI" id="CHEBI:30616"/>
        <dbReference type="ChEBI" id="CHEBI:33019"/>
        <dbReference type="ChEBI" id="CHEBI:57762"/>
        <dbReference type="ChEBI" id="CHEBI:78442"/>
        <dbReference type="ChEBI" id="CHEBI:78537"/>
        <dbReference type="ChEBI" id="CHEBI:456215"/>
        <dbReference type="EC" id="6.1.1.9"/>
    </reaction>
</comment>
<comment type="subcellular location">
    <subcellularLocation>
        <location evidence="1">Cytoplasm</location>
    </subcellularLocation>
</comment>
<comment type="domain">
    <text evidence="1">ValRS has two distinct active sites: one for aminoacylation and one for editing. The misactivated threonine is translocated from the active site to the editing site.</text>
</comment>
<comment type="similarity">
    <text evidence="1">Belongs to the class-I aminoacyl-tRNA synthetase family. ValS type 2 subfamily.</text>
</comment>
<gene>
    <name evidence="1" type="primary">valS</name>
    <name type="ordered locus">MK1424</name>
</gene>
<organism>
    <name type="scientific">Methanopyrus kandleri (strain AV19 / DSM 6324 / JCM 9639 / NBRC 100938)</name>
    <dbReference type="NCBI Taxonomy" id="190192"/>
    <lineage>
        <taxon>Archaea</taxon>
        <taxon>Methanobacteriati</taxon>
        <taxon>Methanobacteriota</taxon>
        <taxon>Methanomada group</taxon>
        <taxon>Methanopyri</taxon>
        <taxon>Methanopyrales</taxon>
        <taxon>Methanopyraceae</taxon>
        <taxon>Methanopyrus</taxon>
    </lineage>
</organism>
<keyword id="KW-0030">Aminoacyl-tRNA synthetase</keyword>
<keyword id="KW-0067">ATP-binding</keyword>
<keyword id="KW-0963">Cytoplasm</keyword>
<keyword id="KW-0436">Ligase</keyword>
<keyword id="KW-0547">Nucleotide-binding</keyword>
<keyword id="KW-0648">Protein biosynthesis</keyword>
<keyword id="KW-1185">Reference proteome</keyword>
<dbReference type="EC" id="6.1.1.9" evidence="1"/>
<dbReference type="EMBL" id="AE009439">
    <property type="protein sequence ID" value="AAM02637.1"/>
    <property type="molecule type" value="Genomic_DNA"/>
</dbReference>
<dbReference type="RefSeq" id="WP_011019792.1">
    <property type="nucleotide sequence ID" value="NC_003551.1"/>
</dbReference>
<dbReference type="SMR" id="Q8TVG5"/>
<dbReference type="FunCoup" id="Q8TVG5">
    <property type="interactions" value="148"/>
</dbReference>
<dbReference type="STRING" id="190192.MK1424"/>
<dbReference type="PaxDb" id="190192-MK1424"/>
<dbReference type="EnsemblBacteria" id="AAM02637">
    <property type="protein sequence ID" value="AAM02637"/>
    <property type="gene ID" value="MK1424"/>
</dbReference>
<dbReference type="GeneID" id="1478019"/>
<dbReference type="KEGG" id="mka:MK1424"/>
<dbReference type="PATRIC" id="fig|190192.8.peg.1580"/>
<dbReference type="HOGENOM" id="CLU_001493_0_2_2"/>
<dbReference type="InParanoid" id="Q8TVG5"/>
<dbReference type="OrthoDB" id="23906at2157"/>
<dbReference type="Proteomes" id="UP000001826">
    <property type="component" value="Chromosome"/>
</dbReference>
<dbReference type="GO" id="GO:0005829">
    <property type="term" value="C:cytosol"/>
    <property type="evidence" value="ECO:0007669"/>
    <property type="project" value="TreeGrafter"/>
</dbReference>
<dbReference type="GO" id="GO:0002161">
    <property type="term" value="F:aminoacyl-tRNA deacylase activity"/>
    <property type="evidence" value="ECO:0007669"/>
    <property type="project" value="InterPro"/>
</dbReference>
<dbReference type="GO" id="GO:0005524">
    <property type="term" value="F:ATP binding"/>
    <property type="evidence" value="ECO:0007669"/>
    <property type="project" value="UniProtKB-UniRule"/>
</dbReference>
<dbReference type="GO" id="GO:0004832">
    <property type="term" value="F:valine-tRNA ligase activity"/>
    <property type="evidence" value="ECO:0007669"/>
    <property type="project" value="UniProtKB-UniRule"/>
</dbReference>
<dbReference type="GO" id="GO:0006438">
    <property type="term" value="P:valyl-tRNA aminoacylation"/>
    <property type="evidence" value="ECO:0007669"/>
    <property type="project" value="UniProtKB-UniRule"/>
</dbReference>
<dbReference type="CDD" id="cd07962">
    <property type="entry name" value="Anticodon_Ia_Val"/>
    <property type="match status" value="1"/>
</dbReference>
<dbReference type="CDD" id="cd00817">
    <property type="entry name" value="ValRS_core"/>
    <property type="match status" value="1"/>
</dbReference>
<dbReference type="FunFam" id="1.10.730.10:FF:000033">
    <property type="entry name" value="Valine--tRNA ligase"/>
    <property type="match status" value="1"/>
</dbReference>
<dbReference type="FunFam" id="3.40.50.620:FF:000192">
    <property type="entry name" value="Valine--tRNA ligase"/>
    <property type="match status" value="1"/>
</dbReference>
<dbReference type="Gene3D" id="3.30.720.200">
    <property type="match status" value="1"/>
</dbReference>
<dbReference type="Gene3D" id="3.40.50.620">
    <property type="entry name" value="HUPs"/>
    <property type="match status" value="2"/>
</dbReference>
<dbReference type="Gene3D" id="1.10.730.10">
    <property type="entry name" value="Isoleucyl-tRNA Synthetase, Domain 1"/>
    <property type="match status" value="1"/>
</dbReference>
<dbReference type="HAMAP" id="MF_02005">
    <property type="entry name" value="Val_tRNA_synth_type2"/>
    <property type="match status" value="1"/>
</dbReference>
<dbReference type="InterPro" id="IPR001412">
    <property type="entry name" value="aa-tRNA-synth_I_CS"/>
</dbReference>
<dbReference type="InterPro" id="IPR002300">
    <property type="entry name" value="aa-tRNA-synth_Ia"/>
</dbReference>
<dbReference type="InterPro" id="IPR033705">
    <property type="entry name" value="Anticodon_Ia_Val"/>
</dbReference>
<dbReference type="InterPro" id="IPR013155">
    <property type="entry name" value="M/V/L/I-tRNA-synth_anticd-bd"/>
</dbReference>
<dbReference type="InterPro" id="IPR014729">
    <property type="entry name" value="Rossmann-like_a/b/a_fold"/>
</dbReference>
<dbReference type="InterPro" id="IPR009080">
    <property type="entry name" value="tRNAsynth_Ia_anticodon-bd"/>
</dbReference>
<dbReference type="InterPro" id="IPR009008">
    <property type="entry name" value="Val/Leu/Ile-tRNA-synth_edit"/>
</dbReference>
<dbReference type="InterPro" id="IPR022874">
    <property type="entry name" value="Valine-tRNA_ligase_type_2"/>
</dbReference>
<dbReference type="InterPro" id="IPR002303">
    <property type="entry name" value="Valyl-tRNA_ligase"/>
</dbReference>
<dbReference type="NCBIfam" id="NF009687">
    <property type="entry name" value="PRK13208.1"/>
    <property type="match status" value="1"/>
</dbReference>
<dbReference type="NCBIfam" id="TIGR00422">
    <property type="entry name" value="valS"/>
    <property type="match status" value="1"/>
</dbReference>
<dbReference type="PANTHER" id="PTHR11946:SF93">
    <property type="entry name" value="VALINE--TRNA LIGASE, CHLOROPLASTIC_MITOCHONDRIAL 2"/>
    <property type="match status" value="1"/>
</dbReference>
<dbReference type="PANTHER" id="PTHR11946">
    <property type="entry name" value="VALYL-TRNA SYNTHETASES"/>
    <property type="match status" value="1"/>
</dbReference>
<dbReference type="Pfam" id="PF08264">
    <property type="entry name" value="Anticodon_1"/>
    <property type="match status" value="1"/>
</dbReference>
<dbReference type="Pfam" id="PF00133">
    <property type="entry name" value="tRNA-synt_1"/>
    <property type="match status" value="1"/>
</dbReference>
<dbReference type="PRINTS" id="PR00986">
    <property type="entry name" value="TRNASYNTHVAL"/>
</dbReference>
<dbReference type="SUPFAM" id="SSF47323">
    <property type="entry name" value="Anticodon-binding domain of a subclass of class I aminoacyl-tRNA synthetases"/>
    <property type="match status" value="1"/>
</dbReference>
<dbReference type="SUPFAM" id="SSF52374">
    <property type="entry name" value="Nucleotidylyl transferase"/>
    <property type="match status" value="1"/>
</dbReference>
<dbReference type="SUPFAM" id="SSF50677">
    <property type="entry name" value="ValRS/IleRS/LeuRS editing domain"/>
    <property type="match status" value="1"/>
</dbReference>
<dbReference type="PROSITE" id="PS00178">
    <property type="entry name" value="AA_TRNA_LIGASE_I"/>
    <property type="match status" value="1"/>
</dbReference>